<proteinExistence type="evidence at transcript level"/>
<evidence type="ECO:0000250" key="1"/>
<evidence type="ECO:0000255" key="2"/>
<evidence type="ECO:0000255" key="3">
    <source>
        <dbReference type="PROSITE-ProRule" id="PRU00174"/>
    </source>
</evidence>
<evidence type="ECO:0000269" key="4">
    <source>
    </source>
</evidence>
<evidence type="ECO:0000305" key="5"/>
<gene>
    <name type="primary">Galnt10</name>
</gene>
<feature type="chain" id="PRO_0000059123" description="Polypeptide N-acetylgalactosaminyltransferase 10">
    <location>
        <begin position="1"/>
        <end position="603"/>
    </location>
</feature>
<feature type="topological domain" description="Cytoplasmic" evidence="2">
    <location>
        <begin position="1"/>
        <end position="11"/>
    </location>
</feature>
<feature type="transmembrane region" description="Helical; Signal-anchor for type II membrane protein" evidence="2">
    <location>
        <begin position="12"/>
        <end position="31"/>
    </location>
</feature>
<feature type="topological domain" description="Lumenal" evidence="2">
    <location>
        <begin position="32"/>
        <end position="603"/>
    </location>
</feature>
<feature type="domain" description="Ricin B-type lectin" evidence="3">
    <location>
        <begin position="458"/>
        <end position="590"/>
    </location>
</feature>
<feature type="region of interest" description="Catalytic subdomain A">
    <location>
        <begin position="144"/>
        <end position="253"/>
    </location>
</feature>
<feature type="region of interest" description="Catalytic subdomain B">
    <location>
        <begin position="311"/>
        <end position="373"/>
    </location>
</feature>
<feature type="region of interest" description="Flexible loop" evidence="1">
    <location>
        <begin position="373"/>
        <end position="384"/>
    </location>
</feature>
<feature type="binding site" evidence="1">
    <location>
        <position position="185"/>
    </location>
    <ligand>
        <name>substrate</name>
    </ligand>
</feature>
<feature type="binding site" evidence="1">
    <location>
        <position position="214"/>
    </location>
    <ligand>
        <name>substrate</name>
    </ligand>
</feature>
<feature type="binding site" evidence="1">
    <location>
        <position position="237"/>
    </location>
    <ligand>
        <name>Mn(2+)</name>
        <dbReference type="ChEBI" id="CHEBI:29035"/>
    </ligand>
</feature>
<feature type="binding site" evidence="1">
    <location>
        <position position="238"/>
    </location>
    <ligand>
        <name>substrate</name>
    </ligand>
</feature>
<feature type="binding site" evidence="1">
    <location>
        <position position="239"/>
    </location>
    <ligand>
        <name>Mn(2+)</name>
        <dbReference type="ChEBI" id="CHEBI:29035"/>
    </ligand>
</feature>
<feature type="binding site" evidence="1">
    <location>
        <position position="342"/>
    </location>
    <ligand>
        <name>substrate</name>
    </ligand>
</feature>
<feature type="binding site" evidence="1">
    <location>
        <position position="370"/>
    </location>
    <ligand>
        <name>Mn(2+)</name>
        <dbReference type="ChEBI" id="CHEBI:29035"/>
    </ligand>
</feature>
<feature type="binding site" evidence="1">
    <location>
        <position position="373"/>
    </location>
    <ligand>
        <name>substrate</name>
    </ligand>
</feature>
<feature type="binding site" evidence="1">
    <location>
        <position position="378"/>
    </location>
    <ligand>
        <name>substrate</name>
    </ligand>
</feature>
<feature type="glycosylation site" description="N-linked (GlcNAc...) asparagine" evidence="2">
    <location>
        <position position="124"/>
    </location>
</feature>
<feature type="glycosylation site" description="N-linked (GlcNAc...) asparagine" evidence="2">
    <location>
        <position position="146"/>
    </location>
</feature>
<feature type="glycosylation site" description="N-linked (GlcNAc...) asparagine" evidence="2">
    <location>
        <position position="593"/>
    </location>
</feature>
<feature type="disulfide bond" evidence="3">
    <location>
        <begin position="135"/>
        <end position="365"/>
    </location>
</feature>
<feature type="disulfide bond" evidence="3">
    <location>
        <begin position="356"/>
        <end position="432"/>
    </location>
</feature>
<feature type="disulfide bond" evidence="3">
    <location>
        <begin position="471"/>
        <end position="488"/>
    </location>
</feature>
<feature type="disulfide bond" evidence="3">
    <location>
        <begin position="523"/>
        <end position="538"/>
    </location>
</feature>
<feature type="disulfide bond" evidence="3">
    <location>
        <begin position="563"/>
        <end position="578"/>
    </location>
</feature>
<feature type="sequence conflict" description="In Ref. 1; BAD21405." evidence="5" ref="1">
    <original>V</original>
    <variation>I</variation>
    <location>
        <position position="233"/>
    </location>
</feature>
<organism>
    <name type="scientific">Mus musculus</name>
    <name type="common">Mouse</name>
    <dbReference type="NCBI Taxonomy" id="10090"/>
    <lineage>
        <taxon>Eukaryota</taxon>
        <taxon>Metazoa</taxon>
        <taxon>Chordata</taxon>
        <taxon>Craniata</taxon>
        <taxon>Vertebrata</taxon>
        <taxon>Euteleostomi</taxon>
        <taxon>Mammalia</taxon>
        <taxon>Eutheria</taxon>
        <taxon>Euarchontoglires</taxon>
        <taxon>Glires</taxon>
        <taxon>Rodentia</taxon>
        <taxon>Myomorpha</taxon>
        <taxon>Muroidea</taxon>
        <taxon>Muridae</taxon>
        <taxon>Murinae</taxon>
        <taxon>Mus</taxon>
        <taxon>Mus</taxon>
    </lineage>
</organism>
<accession>Q6P9S7</accession>
<accession>Q6KAQ2</accession>
<accession>Q8BZU8</accession>
<accession>Q91YJ6</accession>
<name>GLT10_MOUSE</name>
<reference key="1">
    <citation type="journal article" date="2004" name="DNA Res.">
        <title>Prediction of the coding sequences of mouse homologues of FLJ genes: the complete nucleotide sequences of 110 mouse FLJ-homologous cDNAs identified by screening of terminal sequences of cDNA clones randomly sampled from size-fractionated libraries.</title>
        <authorList>
            <person name="Okazaki N."/>
            <person name="Kikuno R."/>
            <person name="Ohara R."/>
            <person name="Inamoto S."/>
            <person name="Koseki H."/>
            <person name="Hiraoka S."/>
            <person name="Saga Y."/>
            <person name="Kitamura H."/>
            <person name="Nakagawa T."/>
            <person name="Nagase T."/>
            <person name="Ohara O."/>
            <person name="Koga H."/>
        </authorList>
    </citation>
    <scope>NUCLEOTIDE SEQUENCE [LARGE SCALE MRNA]</scope>
</reference>
<reference key="2">
    <citation type="journal article" date="2004" name="Genome Res.">
        <title>The status, quality, and expansion of the NIH full-length cDNA project: the Mammalian Gene Collection (MGC).</title>
        <authorList>
            <consortium name="The MGC Project Team"/>
        </authorList>
    </citation>
    <scope>NUCLEOTIDE SEQUENCE [LARGE SCALE MRNA]</scope>
    <source>
        <strain>C57BL/6J</strain>
        <strain>FVB/N</strain>
        <tissue>Brain</tissue>
        <tissue>Mammary tumor</tissue>
    </source>
</reference>
<reference key="3">
    <citation type="journal article" date="2005" name="Science">
        <title>The transcriptional landscape of the mammalian genome.</title>
        <authorList>
            <person name="Carninci P."/>
            <person name="Kasukawa T."/>
            <person name="Katayama S."/>
            <person name="Gough J."/>
            <person name="Frith M.C."/>
            <person name="Maeda N."/>
            <person name="Oyama R."/>
            <person name="Ravasi T."/>
            <person name="Lenhard B."/>
            <person name="Wells C."/>
            <person name="Kodzius R."/>
            <person name="Shimokawa K."/>
            <person name="Bajic V.B."/>
            <person name="Brenner S.E."/>
            <person name="Batalov S."/>
            <person name="Forrest A.R."/>
            <person name="Zavolan M."/>
            <person name="Davis M.J."/>
            <person name="Wilming L.G."/>
            <person name="Aidinis V."/>
            <person name="Allen J.E."/>
            <person name="Ambesi-Impiombato A."/>
            <person name="Apweiler R."/>
            <person name="Aturaliya R.N."/>
            <person name="Bailey T.L."/>
            <person name="Bansal M."/>
            <person name="Baxter L."/>
            <person name="Beisel K.W."/>
            <person name="Bersano T."/>
            <person name="Bono H."/>
            <person name="Chalk A.M."/>
            <person name="Chiu K.P."/>
            <person name="Choudhary V."/>
            <person name="Christoffels A."/>
            <person name="Clutterbuck D.R."/>
            <person name="Crowe M.L."/>
            <person name="Dalla E."/>
            <person name="Dalrymple B.P."/>
            <person name="de Bono B."/>
            <person name="Della Gatta G."/>
            <person name="di Bernardo D."/>
            <person name="Down T."/>
            <person name="Engstrom P."/>
            <person name="Fagiolini M."/>
            <person name="Faulkner G."/>
            <person name="Fletcher C.F."/>
            <person name="Fukushima T."/>
            <person name="Furuno M."/>
            <person name="Futaki S."/>
            <person name="Gariboldi M."/>
            <person name="Georgii-Hemming P."/>
            <person name="Gingeras T.R."/>
            <person name="Gojobori T."/>
            <person name="Green R.E."/>
            <person name="Gustincich S."/>
            <person name="Harbers M."/>
            <person name="Hayashi Y."/>
            <person name="Hensch T.K."/>
            <person name="Hirokawa N."/>
            <person name="Hill D."/>
            <person name="Huminiecki L."/>
            <person name="Iacono M."/>
            <person name="Ikeo K."/>
            <person name="Iwama A."/>
            <person name="Ishikawa T."/>
            <person name="Jakt M."/>
            <person name="Kanapin A."/>
            <person name="Katoh M."/>
            <person name="Kawasawa Y."/>
            <person name="Kelso J."/>
            <person name="Kitamura H."/>
            <person name="Kitano H."/>
            <person name="Kollias G."/>
            <person name="Krishnan S.P."/>
            <person name="Kruger A."/>
            <person name="Kummerfeld S.K."/>
            <person name="Kurochkin I.V."/>
            <person name="Lareau L.F."/>
            <person name="Lazarevic D."/>
            <person name="Lipovich L."/>
            <person name="Liu J."/>
            <person name="Liuni S."/>
            <person name="McWilliam S."/>
            <person name="Madan Babu M."/>
            <person name="Madera M."/>
            <person name="Marchionni L."/>
            <person name="Matsuda H."/>
            <person name="Matsuzawa S."/>
            <person name="Miki H."/>
            <person name="Mignone F."/>
            <person name="Miyake S."/>
            <person name="Morris K."/>
            <person name="Mottagui-Tabar S."/>
            <person name="Mulder N."/>
            <person name="Nakano N."/>
            <person name="Nakauchi H."/>
            <person name="Ng P."/>
            <person name="Nilsson R."/>
            <person name="Nishiguchi S."/>
            <person name="Nishikawa S."/>
            <person name="Nori F."/>
            <person name="Ohara O."/>
            <person name="Okazaki Y."/>
            <person name="Orlando V."/>
            <person name="Pang K.C."/>
            <person name="Pavan W.J."/>
            <person name="Pavesi G."/>
            <person name="Pesole G."/>
            <person name="Petrovsky N."/>
            <person name="Piazza S."/>
            <person name="Reed J."/>
            <person name="Reid J.F."/>
            <person name="Ring B.Z."/>
            <person name="Ringwald M."/>
            <person name="Rost B."/>
            <person name="Ruan Y."/>
            <person name="Salzberg S.L."/>
            <person name="Sandelin A."/>
            <person name="Schneider C."/>
            <person name="Schoenbach C."/>
            <person name="Sekiguchi K."/>
            <person name="Semple C.A."/>
            <person name="Seno S."/>
            <person name="Sessa L."/>
            <person name="Sheng Y."/>
            <person name="Shibata Y."/>
            <person name="Shimada H."/>
            <person name="Shimada K."/>
            <person name="Silva D."/>
            <person name="Sinclair B."/>
            <person name="Sperling S."/>
            <person name="Stupka E."/>
            <person name="Sugiura K."/>
            <person name="Sultana R."/>
            <person name="Takenaka Y."/>
            <person name="Taki K."/>
            <person name="Tammoja K."/>
            <person name="Tan S.L."/>
            <person name="Tang S."/>
            <person name="Taylor M.S."/>
            <person name="Tegner J."/>
            <person name="Teichmann S.A."/>
            <person name="Ueda H.R."/>
            <person name="van Nimwegen E."/>
            <person name="Verardo R."/>
            <person name="Wei C.L."/>
            <person name="Yagi K."/>
            <person name="Yamanishi H."/>
            <person name="Zabarovsky E."/>
            <person name="Zhu S."/>
            <person name="Zimmer A."/>
            <person name="Hide W."/>
            <person name="Bult C."/>
            <person name="Grimmond S.M."/>
            <person name="Teasdale R.D."/>
            <person name="Liu E.T."/>
            <person name="Brusic V."/>
            <person name="Quackenbush J."/>
            <person name="Wahlestedt C."/>
            <person name="Mattick J.S."/>
            <person name="Hume D.A."/>
            <person name="Kai C."/>
            <person name="Sasaki D."/>
            <person name="Tomaru Y."/>
            <person name="Fukuda S."/>
            <person name="Kanamori-Katayama M."/>
            <person name="Suzuki M."/>
            <person name="Aoki J."/>
            <person name="Arakawa T."/>
            <person name="Iida J."/>
            <person name="Imamura K."/>
            <person name="Itoh M."/>
            <person name="Kato T."/>
            <person name="Kawaji H."/>
            <person name="Kawagashira N."/>
            <person name="Kawashima T."/>
            <person name="Kojima M."/>
            <person name="Kondo S."/>
            <person name="Konno H."/>
            <person name="Nakano K."/>
            <person name="Ninomiya N."/>
            <person name="Nishio T."/>
            <person name="Okada M."/>
            <person name="Plessy C."/>
            <person name="Shibata K."/>
            <person name="Shiraki T."/>
            <person name="Suzuki S."/>
            <person name="Tagami M."/>
            <person name="Waki K."/>
            <person name="Watahiki A."/>
            <person name="Okamura-Oho Y."/>
            <person name="Suzuki H."/>
            <person name="Kawai J."/>
            <person name="Hayashizaki Y."/>
        </authorList>
    </citation>
    <scope>NUCLEOTIDE SEQUENCE [LARGE SCALE MRNA] OF 76-603</scope>
    <source>
        <strain>C57BL/6J</strain>
        <tissue>Colon</tissue>
    </source>
</reference>
<reference key="4">
    <citation type="journal article" date="2001" name="J. Biol. Chem.">
        <title>Cloning and characterization of a ninth member of the UDP-GalNAc:polypeptide N-acetylgalactosaminyltransferase family, ppGaNTase-T9.</title>
        <authorList>
            <person name="Ten Hagen K.G."/>
            <person name="Bedi G.S."/>
            <person name="Tetaert D."/>
            <person name="Kingsley P.D."/>
            <person name="Hagen F.K."/>
            <person name="Balys M.M."/>
            <person name="Beres T.M."/>
            <person name="Degand P."/>
            <person name="Tabak L.A."/>
        </authorList>
    </citation>
    <scope>TISSUE SPECIFICITY</scope>
</reference>
<sequence length="603" mass="69116">MRRKEKRLLQAVALALAALVLLPNVGLWALYRERQPDGSPGGLGAAVAPAAVQELHSRQKKTFFLGAEQRLKDWHNKEAIRRDAQRVGYGEQGKPYPMTDAERVDQAYRENGFNIYVSDKISLNRSLPDIRHPNCNSKLYLETLPNTSIIIPFHNEGWSSLLRTVHSVLNRSPPELVAEIVLVDDFSDREHLKKPLEDYMALFPSVRILRTKKREGLIRTRMLGASAATGDVVTFLDSHCEANVNWLPPLLDRIARNRKTIVCPMIDVIDHDDFRYETQAGDAMRGAFDWEMYYKRIPIPPELQKADPSDPFESPVMAGGLFAVDRKWFWELGGYDPGLEIWGGEQYEISFKVWMCGGRMEDIPCSRVGHIYRKYVPYKVPAGVSLARNLKRVAEVWMDEYAEYIYQRRPEYRHLSAGDVVAQKKLRVSLNCKSFKWFMTKIAWDLPKFYPPVEPPAAAWGEIRNVGTGLCTDTKLGTLGSPLRLETCIRGRGEAAWNSMQVFTFTWREDIRPGDPQHTKKFCFDAVSHTSPVTLYDCHSMKGNQLWKYRKDKTLYHPVSGSCMDCSESDHRVFMNTCNPSSLTQQWLFEHTNSTVLENFNKN</sequence>
<dbReference type="EC" id="2.4.1.41"/>
<dbReference type="EMBL" id="AK131155">
    <property type="protein sequence ID" value="BAD21405.1"/>
    <property type="status" value="ALT_INIT"/>
    <property type="molecule type" value="mRNA"/>
</dbReference>
<dbReference type="EMBL" id="BC016585">
    <property type="protein sequence ID" value="AAH16585.1"/>
    <property type="status" value="ALT_INIT"/>
    <property type="molecule type" value="mRNA"/>
</dbReference>
<dbReference type="EMBL" id="BC060617">
    <property type="protein sequence ID" value="AAH60617.1"/>
    <property type="molecule type" value="mRNA"/>
</dbReference>
<dbReference type="EMBL" id="AK033515">
    <property type="protein sequence ID" value="BAC28334.1"/>
    <property type="molecule type" value="mRNA"/>
</dbReference>
<dbReference type="CCDS" id="CCDS24719.1"/>
<dbReference type="RefSeq" id="NP_598950.2">
    <property type="nucleotide sequence ID" value="NM_134189.2"/>
</dbReference>
<dbReference type="SMR" id="Q6P9S7"/>
<dbReference type="FunCoup" id="Q6P9S7">
    <property type="interactions" value="1081"/>
</dbReference>
<dbReference type="STRING" id="10090.ENSMUSP00000065096"/>
<dbReference type="CAZy" id="CBM13">
    <property type="family name" value="Carbohydrate-Binding Module Family 13"/>
</dbReference>
<dbReference type="CAZy" id="GT27">
    <property type="family name" value="Glycosyltransferase Family 27"/>
</dbReference>
<dbReference type="GlyCosmos" id="Q6P9S7">
    <property type="glycosylation" value="3 sites, No reported glycans"/>
</dbReference>
<dbReference type="GlyGen" id="Q6P9S7">
    <property type="glycosylation" value="3 sites"/>
</dbReference>
<dbReference type="PhosphoSitePlus" id="Q6P9S7"/>
<dbReference type="SwissPalm" id="Q6P9S7"/>
<dbReference type="PaxDb" id="10090-ENSMUSP00000065096"/>
<dbReference type="ProteomicsDB" id="270999"/>
<dbReference type="Pumba" id="Q6P9S7"/>
<dbReference type="Antibodypedia" id="2029">
    <property type="antibodies" value="160 antibodies from 25 providers"/>
</dbReference>
<dbReference type="DNASU" id="171212"/>
<dbReference type="Ensembl" id="ENSMUST00000066987.14">
    <property type="protein sequence ID" value="ENSMUSP00000065096.8"/>
    <property type="gene ID" value="ENSMUSG00000020520.15"/>
</dbReference>
<dbReference type="GeneID" id="171212"/>
<dbReference type="KEGG" id="mmu:171212"/>
<dbReference type="UCSC" id="uc007jab.1">
    <property type="organism name" value="mouse"/>
</dbReference>
<dbReference type="AGR" id="MGI:1890480"/>
<dbReference type="CTD" id="55568"/>
<dbReference type="MGI" id="MGI:1890480">
    <property type="gene designation" value="Galnt10"/>
</dbReference>
<dbReference type="VEuPathDB" id="HostDB:ENSMUSG00000020520"/>
<dbReference type="eggNOG" id="KOG3736">
    <property type="taxonomic scope" value="Eukaryota"/>
</dbReference>
<dbReference type="GeneTree" id="ENSGT00940000156690"/>
<dbReference type="HOGENOM" id="CLU_013477_0_1_1"/>
<dbReference type="InParanoid" id="Q6P9S7"/>
<dbReference type="OMA" id="KTQFWEL"/>
<dbReference type="OrthoDB" id="6119243at2759"/>
<dbReference type="PhylomeDB" id="Q6P9S7"/>
<dbReference type="TreeFam" id="TF313267"/>
<dbReference type="Reactome" id="R-MMU-913709">
    <property type="pathway name" value="O-linked glycosylation of mucins"/>
</dbReference>
<dbReference type="UniPathway" id="UPA00378"/>
<dbReference type="BioGRID-ORCS" id="171212">
    <property type="hits" value="2 hits in 77 CRISPR screens"/>
</dbReference>
<dbReference type="ChiTaRS" id="Galnt10">
    <property type="organism name" value="mouse"/>
</dbReference>
<dbReference type="PRO" id="PR:Q6P9S7"/>
<dbReference type="Proteomes" id="UP000000589">
    <property type="component" value="Chromosome 11"/>
</dbReference>
<dbReference type="RNAct" id="Q6P9S7">
    <property type="molecule type" value="protein"/>
</dbReference>
<dbReference type="Bgee" id="ENSMUSG00000020520">
    <property type="expression patterns" value="Expressed in spermatocyte and 228 other cell types or tissues"/>
</dbReference>
<dbReference type="ExpressionAtlas" id="Q6P9S7">
    <property type="expression patterns" value="baseline and differential"/>
</dbReference>
<dbReference type="GO" id="GO:0000139">
    <property type="term" value="C:Golgi membrane"/>
    <property type="evidence" value="ECO:0007669"/>
    <property type="project" value="UniProtKB-SubCell"/>
</dbReference>
<dbReference type="GO" id="GO:0030246">
    <property type="term" value="F:carbohydrate binding"/>
    <property type="evidence" value="ECO:0007669"/>
    <property type="project" value="UniProtKB-KW"/>
</dbReference>
<dbReference type="GO" id="GO:0046872">
    <property type="term" value="F:metal ion binding"/>
    <property type="evidence" value="ECO:0007669"/>
    <property type="project" value="UniProtKB-KW"/>
</dbReference>
<dbReference type="GO" id="GO:0004653">
    <property type="term" value="F:polypeptide N-acetylgalactosaminyltransferase activity"/>
    <property type="evidence" value="ECO:0000314"/>
    <property type="project" value="MGI"/>
</dbReference>
<dbReference type="GO" id="GO:0016266">
    <property type="term" value="P:O-glycan processing"/>
    <property type="evidence" value="ECO:0007669"/>
    <property type="project" value="Ensembl"/>
</dbReference>
<dbReference type="GO" id="GO:0006493">
    <property type="term" value="P:protein O-linked glycosylation"/>
    <property type="evidence" value="ECO:0000314"/>
    <property type="project" value="MGI"/>
</dbReference>
<dbReference type="CDD" id="cd23476">
    <property type="entry name" value="beta-trefoil_Ricin_GALNT10"/>
    <property type="match status" value="1"/>
</dbReference>
<dbReference type="CDD" id="cd02510">
    <property type="entry name" value="pp-GalNAc-T"/>
    <property type="match status" value="1"/>
</dbReference>
<dbReference type="FunFam" id="2.80.10.50:FF:000011">
    <property type="entry name" value="Polypeptide N-acetylgalactosaminyltransferase"/>
    <property type="match status" value="1"/>
</dbReference>
<dbReference type="FunFam" id="3.90.550.10:FF:000029">
    <property type="entry name" value="Polypeptide N-acetylgalactosaminyltransferase"/>
    <property type="match status" value="1"/>
</dbReference>
<dbReference type="Gene3D" id="2.80.10.50">
    <property type="match status" value="1"/>
</dbReference>
<dbReference type="Gene3D" id="3.90.550.10">
    <property type="entry name" value="Spore Coat Polysaccharide Biosynthesis Protein SpsA, Chain A"/>
    <property type="match status" value="1"/>
</dbReference>
<dbReference type="InterPro" id="IPR045885">
    <property type="entry name" value="GalNAc-T"/>
</dbReference>
<dbReference type="InterPro" id="IPR001173">
    <property type="entry name" value="Glyco_trans_2-like"/>
</dbReference>
<dbReference type="InterPro" id="IPR029044">
    <property type="entry name" value="Nucleotide-diphossugar_trans"/>
</dbReference>
<dbReference type="InterPro" id="IPR035992">
    <property type="entry name" value="Ricin_B-like_lectins"/>
</dbReference>
<dbReference type="InterPro" id="IPR000772">
    <property type="entry name" value="Ricin_B_lectin"/>
</dbReference>
<dbReference type="PANTHER" id="PTHR11675">
    <property type="entry name" value="N-ACETYLGALACTOSAMINYLTRANSFERASE"/>
    <property type="match status" value="1"/>
</dbReference>
<dbReference type="PANTHER" id="PTHR11675:SF41">
    <property type="entry name" value="POLYPEPTIDE N-ACETYLGALACTOSAMINYLTRANSFERASE 10"/>
    <property type="match status" value="1"/>
</dbReference>
<dbReference type="Pfam" id="PF00535">
    <property type="entry name" value="Glycos_transf_2"/>
    <property type="match status" value="1"/>
</dbReference>
<dbReference type="Pfam" id="PF00652">
    <property type="entry name" value="Ricin_B_lectin"/>
    <property type="match status" value="1"/>
</dbReference>
<dbReference type="SMART" id="SM00458">
    <property type="entry name" value="RICIN"/>
    <property type="match status" value="1"/>
</dbReference>
<dbReference type="SUPFAM" id="SSF53448">
    <property type="entry name" value="Nucleotide-diphospho-sugar transferases"/>
    <property type="match status" value="1"/>
</dbReference>
<dbReference type="SUPFAM" id="SSF50370">
    <property type="entry name" value="Ricin B-like lectins"/>
    <property type="match status" value="1"/>
</dbReference>
<dbReference type="PROSITE" id="PS50231">
    <property type="entry name" value="RICIN_B_LECTIN"/>
    <property type="match status" value="1"/>
</dbReference>
<comment type="function">
    <text evidence="1">Catalyzes the initial reaction in O-linked oligosaccharide biosynthesis, the transfer of an N-acetyl-D-galactosamine residue to a serine or threonine residue on the protein receptor. Has activity toward Muc5Ac and EA2 peptide substrates (By similarity).</text>
</comment>
<comment type="catalytic activity">
    <reaction>
        <text>L-seryl-[protein] + UDP-N-acetyl-alpha-D-galactosamine = a 3-O-[N-acetyl-alpha-D-galactosaminyl]-L-seryl-[protein] + UDP + H(+)</text>
        <dbReference type="Rhea" id="RHEA:23956"/>
        <dbReference type="Rhea" id="RHEA-COMP:9863"/>
        <dbReference type="Rhea" id="RHEA-COMP:12788"/>
        <dbReference type="ChEBI" id="CHEBI:15378"/>
        <dbReference type="ChEBI" id="CHEBI:29999"/>
        <dbReference type="ChEBI" id="CHEBI:53604"/>
        <dbReference type="ChEBI" id="CHEBI:58223"/>
        <dbReference type="ChEBI" id="CHEBI:67138"/>
        <dbReference type="EC" id="2.4.1.41"/>
    </reaction>
</comment>
<comment type="catalytic activity">
    <reaction>
        <text>L-threonyl-[protein] + UDP-N-acetyl-alpha-D-galactosamine = a 3-O-[N-acetyl-alpha-D-galactosaminyl]-L-threonyl-[protein] + UDP + H(+)</text>
        <dbReference type="Rhea" id="RHEA:52424"/>
        <dbReference type="Rhea" id="RHEA-COMP:11060"/>
        <dbReference type="Rhea" id="RHEA-COMP:11689"/>
        <dbReference type="ChEBI" id="CHEBI:15378"/>
        <dbReference type="ChEBI" id="CHEBI:30013"/>
        <dbReference type="ChEBI" id="CHEBI:58223"/>
        <dbReference type="ChEBI" id="CHEBI:67138"/>
        <dbReference type="ChEBI" id="CHEBI:87075"/>
        <dbReference type="EC" id="2.4.1.41"/>
    </reaction>
</comment>
<comment type="cofactor">
    <cofactor evidence="1">
        <name>Mn(2+)</name>
        <dbReference type="ChEBI" id="CHEBI:29035"/>
    </cofactor>
</comment>
<comment type="pathway">
    <text>Protein modification; protein glycosylation.</text>
</comment>
<comment type="subcellular location">
    <subcellularLocation>
        <location evidence="1">Golgi apparatus membrane</location>
        <topology evidence="1">Single-pass type II membrane protein</topology>
    </subcellularLocation>
</comment>
<comment type="tissue specificity">
    <text evidence="4">Expressed at higher level than GALNT9. In the developing hindbrain region of 14.5 dpc embryos it accumulates in the rapidly dividing, undifferentiated ventricular zone adjacent to the pons. It also accumulates in the regions immediately rostral and caudal to the dorsal rhombic lips differentiating into the cerebellum. Not expressed in the developing choroid plexus.</text>
</comment>
<comment type="domain">
    <text evidence="1">There are two conserved domains in the glycosyltransferase region: the N-terminal domain (domain A, also called GT1 motif), which is probably involved in manganese coordination and substrate binding and the C-terminal domain (domain B, also called Gal/GalNAc-T motif), which is probably involved in catalytic reaction and UDP-Gal binding.</text>
</comment>
<comment type="domain">
    <text evidence="1">The ricin B-type lectin domain binds to GalNAc and contributes to the glycopeptide specificity.</text>
</comment>
<comment type="similarity">
    <text evidence="5">Belongs to the glycosyltransferase 2 family. GalNAc-T subfamily.</text>
</comment>
<comment type="caution">
    <text evidence="5">According to experiments made in rat, this enzyme is unable to transfer GalNAc onto serine or threonine residue on the protein receptor, but instead requires the prior addition of a GalNAc on a peptide before adding additional GalNAc moieties, thereby acting as a glycopeptide transferase.</text>
</comment>
<comment type="sequence caution" evidence="5">
    <conflict type="erroneous initiation">
        <sequence resource="EMBL-CDS" id="AAH16585"/>
    </conflict>
</comment>
<comment type="sequence caution" evidence="5">
    <conflict type="erroneous initiation">
        <sequence resource="EMBL-CDS" id="BAD21405"/>
    </conflict>
</comment>
<comment type="online information" name="Functional Glycomics Gateway - GTase">
    <link uri="http://www.functionalglycomics.org/glycomics/molecule/jsp/glycoEnzyme/viewGlycoEnzyme.jsp?gbpId=gt_mou_518"/>
    <text>Polypeptide N-acetylgalactosaminyltransferase 10</text>
</comment>
<protein>
    <recommendedName>
        <fullName>Polypeptide N-acetylgalactosaminyltransferase 10</fullName>
        <ecNumber>2.4.1.41</ecNumber>
    </recommendedName>
    <alternativeName>
        <fullName>Polypeptide GalNAc transferase 10</fullName>
        <shortName>GalNAc-T10</shortName>
        <shortName>pp-GaNTase 10</shortName>
    </alternativeName>
    <alternativeName>
        <fullName>Protein-UDP acetylgalactosaminyltransferase 10</fullName>
    </alternativeName>
    <alternativeName>
        <fullName>UDP-GalNAc:polypeptide N-acetylgalactosaminyltransferase 10</fullName>
    </alternativeName>
</protein>
<keyword id="KW-1015">Disulfide bond</keyword>
<keyword id="KW-0325">Glycoprotein</keyword>
<keyword id="KW-0328">Glycosyltransferase</keyword>
<keyword id="KW-0333">Golgi apparatus</keyword>
<keyword id="KW-0430">Lectin</keyword>
<keyword id="KW-0464">Manganese</keyword>
<keyword id="KW-0472">Membrane</keyword>
<keyword id="KW-0479">Metal-binding</keyword>
<keyword id="KW-1185">Reference proteome</keyword>
<keyword id="KW-0735">Signal-anchor</keyword>
<keyword id="KW-0808">Transferase</keyword>
<keyword id="KW-0812">Transmembrane</keyword>
<keyword id="KW-1133">Transmembrane helix</keyword>